<dbReference type="EC" id="2.4.1.-" evidence="1"/>
<dbReference type="EMBL" id="BC055191">
    <property type="protein sequence ID" value="AAH55191.1"/>
    <property type="molecule type" value="mRNA"/>
</dbReference>
<dbReference type="RefSeq" id="NP_956770.1">
    <property type="nucleotide sequence ID" value="NM_200476.1"/>
</dbReference>
<dbReference type="FunCoup" id="Q7SXZ1">
    <property type="interactions" value="2657"/>
</dbReference>
<dbReference type="STRING" id="7955.ENSDARP00000132192"/>
<dbReference type="CAZy" id="GT22">
    <property type="family name" value="Glycosyltransferase Family 22"/>
</dbReference>
<dbReference type="GlyCosmos" id="Q7SXZ1">
    <property type="glycosylation" value="3 sites, No reported glycans"/>
</dbReference>
<dbReference type="PaxDb" id="7955-ENSDARP00000032121"/>
<dbReference type="GeneID" id="393448"/>
<dbReference type="KEGG" id="dre:393448"/>
<dbReference type="AGR" id="ZFIN:ZDB-GENE-040426-1216"/>
<dbReference type="CTD" id="9488"/>
<dbReference type="ZFIN" id="ZDB-GENE-040426-1216">
    <property type="gene designation" value="pigb"/>
</dbReference>
<dbReference type="eggNOG" id="KOG1771">
    <property type="taxonomic scope" value="Eukaryota"/>
</dbReference>
<dbReference type="InParanoid" id="Q7SXZ1"/>
<dbReference type="OrthoDB" id="416834at2759"/>
<dbReference type="PhylomeDB" id="Q7SXZ1"/>
<dbReference type="Reactome" id="R-DRE-162710">
    <property type="pathway name" value="Synthesis of glycosylphosphatidylinositol (GPI)"/>
</dbReference>
<dbReference type="UniPathway" id="UPA00196"/>
<dbReference type="PRO" id="PR:Q7SXZ1"/>
<dbReference type="Proteomes" id="UP000000437">
    <property type="component" value="Chromosome 18"/>
</dbReference>
<dbReference type="GO" id="GO:0005789">
    <property type="term" value="C:endoplasmic reticulum membrane"/>
    <property type="evidence" value="ECO:0000318"/>
    <property type="project" value="GO_Central"/>
</dbReference>
<dbReference type="GO" id="GO:0000026">
    <property type="term" value="F:alpha-1,2-mannosyltransferase activity"/>
    <property type="evidence" value="ECO:0000318"/>
    <property type="project" value="GO_Central"/>
</dbReference>
<dbReference type="GO" id="GO:0006506">
    <property type="term" value="P:GPI anchor biosynthetic process"/>
    <property type="evidence" value="ECO:0000318"/>
    <property type="project" value="GO_Central"/>
</dbReference>
<dbReference type="InterPro" id="IPR005599">
    <property type="entry name" value="GPI_mannosylTrfase"/>
</dbReference>
<dbReference type="PANTHER" id="PTHR22760">
    <property type="entry name" value="GLYCOSYLTRANSFERASE"/>
    <property type="match status" value="1"/>
</dbReference>
<dbReference type="PANTHER" id="PTHR22760:SF4">
    <property type="entry name" value="GPI MANNOSYLTRANSFERASE 3"/>
    <property type="match status" value="1"/>
</dbReference>
<dbReference type="Pfam" id="PF03901">
    <property type="entry name" value="Glyco_transf_22"/>
    <property type="match status" value="1"/>
</dbReference>
<sequence>MEKIRERFKQSKSSNESVRLRKRSSILYSTDDRKLQTLKIFGINITVFIVLVRLLNCVLVQTSFVPDEFWQSLEISHRMVFGYGYETWEWKEGIRGYSYPLLFALMYKLLQLISYDTVYLLVFVPRVFQALLAAYADVKLYKLILQWETPDVAKWTCFCQLCSWFAWFCCSRTLTNTTETALTTLALCFYPLPGSKTHSSWKYLTLVSLAVVIRPTALIVWFPLIFYHFCTDQDKLKLITHRYFPIGVLALGVSTLIDSFFYGKWIFVQWNFLKFNVLHNVGEFYGSHPWHWYWTQGLPVVIGPHLPLVLHGCLLSTRKHTILLLTIIWTTAVYSLLAHKEFRFIYPVLPFCMIFCGLSLAKLQAWRKAAAGALLLFNLCPALYTGLVHQRGALDVMHVLQPLCVSSQSPNPPELLFLMPCHSTPLYSHLHCPLKLRFLECPPDLTGRQDYMDEADVFFSDPLHWLNTSFPLRSTLPSHLVLFDSLQKEISSFLEENSFAKQAEIFHTHFPEGRVGKNILIYSRRSEMKINEGFIL</sequence>
<keyword id="KW-0256">Endoplasmic reticulum</keyword>
<keyword id="KW-0325">Glycoprotein</keyword>
<keyword id="KW-0328">Glycosyltransferase</keyword>
<keyword id="KW-0337">GPI-anchor biosynthesis</keyword>
<keyword id="KW-0472">Membrane</keyword>
<keyword id="KW-1185">Reference proteome</keyword>
<keyword id="KW-0808">Transferase</keyword>
<keyword id="KW-0812">Transmembrane</keyword>
<keyword id="KW-1133">Transmembrane helix</keyword>
<organism>
    <name type="scientific">Danio rerio</name>
    <name type="common">Zebrafish</name>
    <name type="synonym">Brachydanio rerio</name>
    <dbReference type="NCBI Taxonomy" id="7955"/>
    <lineage>
        <taxon>Eukaryota</taxon>
        <taxon>Metazoa</taxon>
        <taxon>Chordata</taxon>
        <taxon>Craniata</taxon>
        <taxon>Vertebrata</taxon>
        <taxon>Euteleostomi</taxon>
        <taxon>Actinopterygii</taxon>
        <taxon>Neopterygii</taxon>
        <taxon>Teleostei</taxon>
        <taxon>Ostariophysi</taxon>
        <taxon>Cypriniformes</taxon>
        <taxon>Danionidae</taxon>
        <taxon>Danioninae</taxon>
        <taxon>Danio</taxon>
    </lineage>
</organism>
<gene>
    <name evidence="1" type="primary">pigb</name>
    <name type="ORF">zgc:63658</name>
</gene>
<evidence type="ECO:0000250" key="1">
    <source>
        <dbReference type="UniProtKB" id="Q92521"/>
    </source>
</evidence>
<evidence type="ECO:0000255" key="2"/>
<evidence type="ECO:0000305" key="3"/>
<reference key="1">
    <citation type="submission" date="2003-07" db="EMBL/GenBank/DDBJ databases">
        <authorList>
            <consortium name="NIH - Zebrafish Gene Collection (ZGC) project"/>
        </authorList>
    </citation>
    <scope>NUCLEOTIDE SEQUENCE [LARGE SCALE MRNA]</scope>
    <source>
        <strain>SJD</strain>
    </source>
</reference>
<protein>
    <recommendedName>
        <fullName>GPI alpha-1,2-mannosyltransferase 3</fullName>
        <ecNumber evidence="1">2.4.1.-</ecNumber>
    </recommendedName>
    <alternativeName>
        <fullName>GPI mannosyltransferase III</fullName>
        <shortName>GPI-MT-III</shortName>
    </alternativeName>
    <alternativeName>
        <fullName evidence="1">Phosphatidylinositol-glycan biosynthesis class B protein</fullName>
        <shortName evidence="1">PIG-B</shortName>
    </alternativeName>
</protein>
<accession>Q7SXZ1</accession>
<name>PIGB_DANRE</name>
<comment type="function">
    <text evidence="1">Alpha-1,2-mannosyltransferase that catalyzes the transfer of the third mannose, via an alpha-1,2 bond, from a dolichol-phosphate-mannose (Dol-P-Man) to an alpha-D-Man-(1-&gt;6)-2-PEtn-alpha-D-Man-(1-&gt;4)-alpha-D-GlcN-(1-&gt;6)-(1-radyl,2-acyl-sn-glycero-3-phospho)-2-acyl-inositol intermediate to generate an alpha-D-Man-(1-&gt;2)-alpha-D-Man-(1-&gt;6)-2-PEtn-alpha-D-Man-(1-&gt;4)-alpha-D-GlcN-(1-&gt;6)-(1-radyl,2-acyl-sn-glycero-3-phospho)-2-acyl-inositol (also termed H6) and participates in the nineth step of the glycosylphosphatidylinositol-anchor biosynthesis (By similarity). May also add the third mannose to an alpha-D-Man-(1-&gt;6)-alpha-D-Man-(1-&gt;4)-alpha-D-GlcN-(1-&gt;6)-(1-radyl,2-acyl-sn-glycero-3-phospho)-2-acyl-inositol (also termed H3) intermediate generating an alpha-D-Man-(1-&gt;2)-alpha-D-Man-(1-&gt;6)-alpha-D-Man-(1-&gt;4)-alpha-D-GlcN-(1-&gt;6)-(1-radyl,2-acyl-sn-glycero-3-phospho)-2-acyl-inositol (also termed H4) (By similarity).</text>
</comment>
<comment type="pathway">
    <text evidence="1">Glycolipid biosynthesis; glycosylphosphatidylinositol-anchor biosynthesis.</text>
</comment>
<comment type="subcellular location">
    <subcellularLocation>
        <location evidence="1">Endoplasmic reticulum membrane</location>
        <topology evidence="2">Multi-pass membrane protein</topology>
    </subcellularLocation>
</comment>
<comment type="similarity">
    <text evidence="3">Belongs to the glycosyltransferase 22 family. PIGB subfamily.</text>
</comment>
<proteinExistence type="evidence at transcript level"/>
<feature type="chain" id="PRO_0000246253" description="GPI alpha-1,2-mannosyltransferase 3">
    <location>
        <begin position="1"/>
        <end position="536"/>
    </location>
</feature>
<feature type="transmembrane region" description="Helical" evidence="2">
    <location>
        <begin position="40"/>
        <end position="60"/>
    </location>
</feature>
<feature type="transmembrane region" description="Helical" evidence="2">
    <location>
        <begin position="118"/>
        <end position="138"/>
    </location>
</feature>
<feature type="transmembrane region" description="Helical" evidence="2">
    <location>
        <begin position="206"/>
        <end position="226"/>
    </location>
</feature>
<feature type="transmembrane region" description="Helical" evidence="2">
    <location>
        <begin position="243"/>
        <end position="263"/>
    </location>
</feature>
<feature type="transmembrane region" description="Helical" evidence="2">
    <location>
        <begin position="297"/>
        <end position="317"/>
    </location>
</feature>
<feature type="transmembrane region" description="Helical" evidence="2">
    <location>
        <begin position="322"/>
        <end position="342"/>
    </location>
</feature>
<feature type="transmembrane region" description="Helical" evidence="2">
    <location>
        <begin position="344"/>
        <end position="364"/>
    </location>
</feature>
<feature type="transmembrane region" description="Helical" evidence="2">
    <location>
        <begin position="369"/>
        <end position="389"/>
    </location>
</feature>
<feature type="glycosylation site" description="N-linked (GlcNAc...) asparagine" evidence="2">
    <location>
        <position position="15"/>
    </location>
</feature>
<feature type="glycosylation site" description="N-linked (GlcNAc...) asparagine" evidence="2">
    <location>
        <position position="176"/>
    </location>
</feature>
<feature type="glycosylation site" description="N-linked (GlcNAc...) asparagine" evidence="2">
    <location>
        <position position="467"/>
    </location>
</feature>